<name>LUKL2_STAAM</name>
<gene>
    <name type="ordered locus">SAV2005</name>
</gene>
<feature type="signal peptide" evidence="1">
    <location>
        <begin position="1"/>
        <end position="27"/>
    </location>
</feature>
<feature type="chain" id="PRO_0000298643" description="Uncharacterized leukocidin-like protein 2">
    <location>
        <begin position="28"/>
        <end position="351"/>
    </location>
</feature>
<feature type="region of interest" description="Disordered" evidence="2">
    <location>
        <begin position="29"/>
        <end position="71"/>
    </location>
</feature>
<feature type="compositionally biased region" description="Basic and acidic residues" evidence="2">
    <location>
        <begin position="30"/>
        <end position="60"/>
    </location>
</feature>
<protein>
    <recommendedName>
        <fullName>Uncharacterized leukocidin-like protein 2</fullName>
    </recommendedName>
</protein>
<dbReference type="EMBL" id="BA000017">
    <property type="protein sequence ID" value="BAB58167.1"/>
    <property type="molecule type" value="Genomic_DNA"/>
</dbReference>
<dbReference type="RefSeq" id="WP_000791413.1">
    <property type="nucleotide sequence ID" value="NC_002758.2"/>
</dbReference>
<dbReference type="SMR" id="Q931I5"/>
<dbReference type="KEGG" id="sav:SAV2005"/>
<dbReference type="HOGENOM" id="CLU_865755_0_0_9"/>
<dbReference type="PhylomeDB" id="Q931I5"/>
<dbReference type="Proteomes" id="UP000002481">
    <property type="component" value="Chromosome"/>
</dbReference>
<dbReference type="GO" id="GO:0005576">
    <property type="term" value="C:extracellular region"/>
    <property type="evidence" value="ECO:0007669"/>
    <property type="project" value="InterPro"/>
</dbReference>
<dbReference type="GO" id="GO:0051715">
    <property type="term" value="P:cytolysis in another organism"/>
    <property type="evidence" value="ECO:0007669"/>
    <property type="project" value="InterPro"/>
</dbReference>
<dbReference type="Gene3D" id="2.70.240.10">
    <property type="entry name" value="Leukocidin/porin MspA"/>
    <property type="match status" value="1"/>
</dbReference>
<dbReference type="InterPro" id="IPR003963">
    <property type="entry name" value="Bi-component_toxin_staph"/>
</dbReference>
<dbReference type="InterPro" id="IPR016183">
    <property type="entry name" value="Leukocidin/Hemolysin_toxin"/>
</dbReference>
<dbReference type="InterPro" id="IPR036435">
    <property type="entry name" value="Leukocidin/porin_MspA_sf"/>
</dbReference>
<dbReference type="Pfam" id="PF07968">
    <property type="entry name" value="Leukocidin"/>
    <property type="match status" value="1"/>
</dbReference>
<dbReference type="PRINTS" id="PR01468">
    <property type="entry name" value="BICOMPNTOXIN"/>
</dbReference>
<dbReference type="SUPFAM" id="SSF56959">
    <property type="entry name" value="Leukocidin-like"/>
    <property type="match status" value="1"/>
</dbReference>
<organism>
    <name type="scientific">Staphylococcus aureus (strain Mu50 / ATCC 700699)</name>
    <dbReference type="NCBI Taxonomy" id="158878"/>
    <lineage>
        <taxon>Bacteria</taxon>
        <taxon>Bacillati</taxon>
        <taxon>Bacillota</taxon>
        <taxon>Bacilli</taxon>
        <taxon>Bacillales</taxon>
        <taxon>Staphylococcaceae</taxon>
        <taxon>Staphylococcus</taxon>
    </lineage>
</organism>
<comment type="similarity">
    <text evidence="3">Belongs to the aerolysin family.</text>
</comment>
<keyword id="KW-0732">Signal</keyword>
<reference key="1">
    <citation type="journal article" date="2001" name="Lancet">
        <title>Whole genome sequencing of meticillin-resistant Staphylococcus aureus.</title>
        <authorList>
            <person name="Kuroda M."/>
            <person name="Ohta T."/>
            <person name="Uchiyama I."/>
            <person name="Baba T."/>
            <person name="Yuzawa H."/>
            <person name="Kobayashi I."/>
            <person name="Cui L."/>
            <person name="Oguchi A."/>
            <person name="Aoki K."/>
            <person name="Nagai Y."/>
            <person name="Lian J.-Q."/>
            <person name="Ito T."/>
            <person name="Kanamori M."/>
            <person name="Matsumaru H."/>
            <person name="Maruyama A."/>
            <person name="Murakami H."/>
            <person name="Hosoyama A."/>
            <person name="Mizutani-Ui Y."/>
            <person name="Takahashi N.K."/>
            <person name="Sawano T."/>
            <person name="Inoue R."/>
            <person name="Kaito C."/>
            <person name="Sekimizu K."/>
            <person name="Hirakawa H."/>
            <person name="Kuhara S."/>
            <person name="Goto S."/>
            <person name="Yabuzaki J."/>
            <person name="Kanehisa M."/>
            <person name="Yamashita A."/>
            <person name="Oshima K."/>
            <person name="Furuya K."/>
            <person name="Yoshino C."/>
            <person name="Shiba T."/>
            <person name="Hattori M."/>
            <person name="Ogasawara N."/>
            <person name="Hayashi H."/>
            <person name="Hiramatsu K."/>
        </authorList>
    </citation>
    <scope>NUCLEOTIDE SEQUENCE [LARGE SCALE GENOMIC DNA]</scope>
    <source>
        <strain>Mu50 / ATCC 700699</strain>
    </source>
</reference>
<evidence type="ECO:0000255" key="1"/>
<evidence type="ECO:0000256" key="2">
    <source>
        <dbReference type="SAM" id="MobiDB-lite"/>
    </source>
</evidence>
<evidence type="ECO:0000305" key="3"/>
<proteinExistence type="inferred from homology"/>
<sequence length="351" mass="40452">MKNKKRVLIASSLSCAILLLSAATTQANSAHKDSQDQNKKEHVDKSQQKDKRNVTNKDKNSTVPDDIGKNGKITKRTETVYDEKTNILQNLQFDFIDDPTYDKNVLLVKKQGSIHSNLKFESHKEEKNSNWLKYPSEYHVDFQVKRNRKTEILDQLPKNKISTAKVDSTFSYSSGGKFDSTKGIGRTSSNSYSKTISYNQQNYDTIASGKNNNWHVHWSVIANDLKYGGEVKNRNDELLFYRNTRIATVENPELSFASKYRYPALVRSGFNPEFLTYLSNEKSNEKTQFEVTYTRNQDILKNRPGIHYAPSILEKNKDGQRLIVTYEVDWKNKTVKVVDKYSDDNKPYKEG</sequence>
<accession>Q931I5</accession>